<evidence type="ECO:0000255" key="1">
    <source>
        <dbReference type="HAMAP-Rule" id="MF_00052"/>
    </source>
</evidence>
<evidence type="ECO:0000255" key="2">
    <source>
        <dbReference type="PROSITE-ProRule" id="PRU01319"/>
    </source>
</evidence>
<gene>
    <name evidence="1" type="primary">rnhB</name>
    <name type="ordered locus">Dshi_0023</name>
</gene>
<accession>A8LJU6</accession>
<dbReference type="EC" id="3.1.26.4" evidence="1"/>
<dbReference type="EMBL" id="CP000830">
    <property type="protein sequence ID" value="ABV91772.1"/>
    <property type="molecule type" value="Genomic_DNA"/>
</dbReference>
<dbReference type="RefSeq" id="WP_012176705.1">
    <property type="nucleotide sequence ID" value="NC_009952.1"/>
</dbReference>
<dbReference type="SMR" id="A8LJU6"/>
<dbReference type="STRING" id="398580.Dshi_0023"/>
<dbReference type="KEGG" id="dsh:Dshi_0023"/>
<dbReference type="eggNOG" id="COG0164">
    <property type="taxonomic scope" value="Bacteria"/>
</dbReference>
<dbReference type="HOGENOM" id="CLU_036532_3_2_5"/>
<dbReference type="OrthoDB" id="9803420at2"/>
<dbReference type="Proteomes" id="UP000006833">
    <property type="component" value="Chromosome"/>
</dbReference>
<dbReference type="GO" id="GO:0005737">
    <property type="term" value="C:cytoplasm"/>
    <property type="evidence" value="ECO:0007669"/>
    <property type="project" value="UniProtKB-SubCell"/>
</dbReference>
<dbReference type="GO" id="GO:0032299">
    <property type="term" value="C:ribonuclease H2 complex"/>
    <property type="evidence" value="ECO:0007669"/>
    <property type="project" value="TreeGrafter"/>
</dbReference>
<dbReference type="GO" id="GO:0030145">
    <property type="term" value="F:manganese ion binding"/>
    <property type="evidence" value="ECO:0007669"/>
    <property type="project" value="UniProtKB-UniRule"/>
</dbReference>
<dbReference type="GO" id="GO:0003723">
    <property type="term" value="F:RNA binding"/>
    <property type="evidence" value="ECO:0007669"/>
    <property type="project" value="InterPro"/>
</dbReference>
<dbReference type="GO" id="GO:0004523">
    <property type="term" value="F:RNA-DNA hybrid ribonuclease activity"/>
    <property type="evidence" value="ECO:0007669"/>
    <property type="project" value="UniProtKB-UniRule"/>
</dbReference>
<dbReference type="GO" id="GO:0043137">
    <property type="term" value="P:DNA replication, removal of RNA primer"/>
    <property type="evidence" value="ECO:0007669"/>
    <property type="project" value="TreeGrafter"/>
</dbReference>
<dbReference type="GO" id="GO:0006298">
    <property type="term" value="P:mismatch repair"/>
    <property type="evidence" value="ECO:0007669"/>
    <property type="project" value="TreeGrafter"/>
</dbReference>
<dbReference type="CDD" id="cd07182">
    <property type="entry name" value="RNase_HII_bacteria_HII_like"/>
    <property type="match status" value="1"/>
</dbReference>
<dbReference type="Gene3D" id="3.30.420.10">
    <property type="entry name" value="Ribonuclease H-like superfamily/Ribonuclease H"/>
    <property type="match status" value="1"/>
</dbReference>
<dbReference type="HAMAP" id="MF_00052_B">
    <property type="entry name" value="RNase_HII_B"/>
    <property type="match status" value="1"/>
</dbReference>
<dbReference type="InterPro" id="IPR022898">
    <property type="entry name" value="RNase_HII"/>
</dbReference>
<dbReference type="InterPro" id="IPR001352">
    <property type="entry name" value="RNase_HII/HIII"/>
</dbReference>
<dbReference type="InterPro" id="IPR024567">
    <property type="entry name" value="RNase_HII/HIII_dom"/>
</dbReference>
<dbReference type="InterPro" id="IPR012337">
    <property type="entry name" value="RNaseH-like_sf"/>
</dbReference>
<dbReference type="InterPro" id="IPR036397">
    <property type="entry name" value="RNaseH_sf"/>
</dbReference>
<dbReference type="NCBIfam" id="NF000595">
    <property type="entry name" value="PRK00015.1-3"/>
    <property type="match status" value="1"/>
</dbReference>
<dbReference type="PANTHER" id="PTHR10954">
    <property type="entry name" value="RIBONUCLEASE H2 SUBUNIT A"/>
    <property type="match status" value="1"/>
</dbReference>
<dbReference type="PANTHER" id="PTHR10954:SF18">
    <property type="entry name" value="RIBONUCLEASE HII"/>
    <property type="match status" value="1"/>
</dbReference>
<dbReference type="Pfam" id="PF01351">
    <property type="entry name" value="RNase_HII"/>
    <property type="match status" value="1"/>
</dbReference>
<dbReference type="SUPFAM" id="SSF53098">
    <property type="entry name" value="Ribonuclease H-like"/>
    <property type="match status" value="1"/>
</dbReference>
<dbReference type="PROSITE" id="PS51975">
    <property type="entry name" value="RNASE_H_2"/>
    <property type="match status" value="1"/>
</dbReference>
<comment type="function">
    <text evidence="1">Endonuclease that specifically degrades the RNA of RNA-DNA hybrids.</text>
</comment>
<comment type="catalytic activity">
    <reaction evidence="1">
        <text>Endonucleolytic cleavage to 5'-phosphomonoester.</text>
        <dbReference type="EC" id="3.1.26.4"/>
    </reaction>
</comment>
<comment type="cofactor">
    <cofactor evidence="1">
        <name>Mn(2+)</name>
        <dbReference type="ChEBI" id="CHEBI:29035"/>
    </cofactor>
    <cofactor evidence="1">
        <name>Mg(2+)</name>
        <dbReference type="ChEBI" id="CHEBI:18420"/>
    </cofactor>
    <text evidence="1">Manganese or magnesium. Binds 1 divalent metal ion per monomer in the absence of substrate. May bind a second metal ion after substrate binding.</text>
</comment>
<comment type="subcellular location">
    <subcellularLocation>
        <location evidence="1">Cytoplasm</location>
    </subcellularLocation>
</comment>
<comment type="similarity">
    <text evidence="1">Belongs to the RNase HII family.</text>
</comment>
<organism>
    <name type="scientific">Dinoroseobacter shibae (strain DSM 16493 / NCIMB 14021 / DFL 12)</name>
    <dbReference type="NCBI Taxonomy" id="398580"/>
    <lineage>
        <taxon>Bacteria</taxon>
        <taxon>Pseudomonadati</taxon>
        <taxon>Pseudomonadota</taxon>
        <taxon>Alphaproteobacteria</taxon>
        <taxon>Rhodobacterales</taxon>
        <taxon>Roseobacteraceae</taxon>
        <taxon>Dinoroseobacter</taxon>
    </lineage>
</organism>
<reference key="1">
    <citation type="journal article" date="2010" name="ISME J.">
        <title>The complete genome sequence of the algal symbiont Dinoroseobacter shibae: a hitchhiker's guide to life in the sea.</title>
        <authorList>
            <person name="Wagner-Dobler I."/>
            <person name="Ballhausen B."/>
            <person name="Berger M."/>
            <person name="Brinkhoff T."/>
            <person name="Buchholz I."/>
            <person name="Bunk B."/>
            <person name="Cypionka H."/>
            <person name="Daniel R."/>
            <person name="Drepper T."/>
            <person name="Gerdts G."/>
            <person name="Hahnke S."/>
            <person name="Han C."/>
            <person name="Jahn D."/>
            <person name="Kalhoefer D."/>
            <person name="Kiss H."/>
            <person name="Klenk H.P."/>
            <person name="Kyrpides N."/>
            <person name="Liebl W."/>
            <person name="Liesegang H."/>
            <person name="Meincke L."/>
            <person name="Pati A."/>
            <person name="Petersen J."/>
            <person name="Piekarski T."/>
            <person name="Pommerenke C."/>
            <person name="Pradella S."/>
            <person name="Pukall R."/>
            <person name="Rabus R."/>
            <person name="Stackebrandt E."/>
            <person name="Thole S."/>
            <person name="Thompson L."/>
            <person name="Tielen P."/>
            <person name="Tomasch J."/>
            <person name="von Jan M."/>
            <person name="Wanphrut N."/>
            <person name="Wichels A."/>
            <person name="Zech H."/>
            <person name="Simon M."/>
        </authorList>
    </citation>
    <scope>NUCLEOTIDE SEQUENCE [LARGE SCALE GENOMIC DNA]</scope>
    <source>
        <strain>DSM 16493 / NCIMB 14021 / DFL 12</strain>
    </source>
</reference>
<protein>
    <recommendedName>
        <fullName evidence="1">Ribonuclease HII</fullName>
        <shortName evidence="1">RNase HII</shortName>
        <ecNumber evidence="1">3.1.26.4</ecNumber>
    </recommendedName>
</protein>
<keyword id="KW-0963">Cytoplasm</keyword>
<keyword id="KW-0255">Endonuclease</keyword>
<keyword id="KW-0378">Hydrolase</keyword>
<keyword id="KW-0464">Manganese</keyword>
<keyword id="KW-0479">Metal-binding</keyword>
<keyword id="KW-0540">Nuclease</keyword>
<keyword id="KW-1185">Reference proteome</keyword>
<name>RNH2_DINSH</name>
<feature type="chain" id="PRO_0000334894" description="Ribonuclease HII">
    <location>
        <begin position="1"/>
        <end position="206"/>
    </location>
</feature>
<feature type="domain" description="RNase H type-2" evidence="2">
    <location>
        <begin position="18"/>
        <end position="206"/>
    </location>
</feature>
<feature type="binding site" evidence="1">
    <location>
        <position position="24"/>
    </location>
    <ligand>
        <name>a divalent metal cation</name>
        <dbReference type="ChEBI" id="CHEBI:60240"/>
    </ligand>
</feature>
<feature type="binding site" evidence="1">
    <location>
        <position position="25"/>
    </location>
    <ligand>
        <name>a divalent metal cation</name>
        <dbReference type="ChEBI" id="CHEBI:60240"/>
    </ligand>
</feature>
<feature type="binding site" evidence="1">
    <location>
        <position position="115"/>
    </location>
    <ligand>
        <name>a divalent metal cation</name>
        <dbReference type="ChEBI" id="CHEBI:60240"/>
    </ligand>
</feature>
<sequence length="206" mass="21985">MSRPHFQFETDLAARGYLRIAGVDEVGRGPLAGPVMAAAVVLDPGAIPEGLNDSKQVTAKRREALAAQLAQVAQVGVGVAEVAEIDRLNIRRAAHLAMLRALDALPAPPDMALIDGRDRPDDLPCAAHAIIKGDTKSLSIAAASIVAKVARDRVMTALAAEFPGYGWETNAGYPTQAHRAALLDIGVSPHHRRSFRPVHNILYQEK</sequence>
<proteinExistence type="inferred from homology"/>